<gene>
    <name type="primary">UBE2L3</name>
</gene>
<proteinExistence type="evidence at transcript level"/>
<evidence type="ECO:0000250" key="1">
    <source>
        <dbReference type="UniProtKB" id="P68036"/>
    </source>
</evidence>
<evidence type="ECO:0000255" key="2">
    <source>
        <dbReference type="PROSITE-ProRule" id="PRU00388"/>
    </source>
</evidence>
<evidence type="ECO:0000255" key="3">
    <source>
        <dbReference type="PROSITE-ProRule" id="PRU10133"/>
    </source>
</evidence>
<organism>
    <name type="scientific">Bos taurus</name>
    <name type="common">Bovine</name>
    <dbReference type="NCBI Taxonomy" id="9913"/>
    <lineage>
        <taxon>Eukaryota</taxon>
        <taxon>Metazoa</taxon>
        <taxon>Chordata</taxon>
        <taxon>Craniata</taxon>
        <taxon>Vertebrata</taxon>
        <taxon>Euteleostomi</taxon>
        <taxon>Mammalia</taxon>
        <taxon>Eutheria</taxon>
        <taxon>Laurasiatheria</taxon>
        <taxon>Artiodactyla</taxon>
        <taxon>Ruminantia</taxon>
        <taxon>Pecora</taxon>
        <taxon>Bovidae</taxon>
        <taxon>Bovinae</taxon>
        <taxon>Bos</taxon>
    </lineage>
</organism>
<feature type="chain" id="PRO_0000245037" description="Ubiquitin-conjugating enzyme E2 L3">
    <location>
        <begin position="1"/>
        <end position="154"/>
    </location>
</feature>
<feature type="domain" description="UBC core" evidence="2">
    <location>
        <begin position="2"/>
        <end position="149"/>
    </location>
</feature>
<feature type="active site" description="Glycyl thioester intermediate" evidence="2 3">
    <location>
        <position position="86"/>
    </location>
</feature>
<feature type="modified residue" description="N6-acetyllysine" evidence="1">
    <location>
        <position position="131"/>
    </location>
</feature>
<sequence length="154" mass="17862">MAASRRLMKELEEIRKCGMKNFRNIQVDEANLLTWQGLIVPDNPPYDKGAFRIEINFPAEYPFKPPKITFKTKIYHPNIDEKGQVCLPVISAENWKPATKTDQVIQSLIALVNDPQPEHPLRADLAEEYSKDRKKFCKNAEEFTKKYGEKRPVD</sequence>
<dbReference type="EC" id="2.3.2.23"/>
<dbReference type="EMBL" id="BC105164">
    <property type="protein sequence ID" value="AAI05165.1"/>
    <property type="molecule type" value="mRNA"/>
</dbReference>
<dbReference type="EMBL" id="BT025380">
    <property type="protein sequence ID" value="ABF57336.1"/>
    <property type="molecule type" value="mRNA"/>
</dbReference>
<dbReference type="RefSeq" id="NP_001071562.1">
    <property type="nucleotide sequence ID" value="NM_001078094.1"/>
</dbReference>
<dbReference type="BMRB" id="Q3MHP1"/>
<dbReference type="SMR" id="Q3MHP1"/>
<dbReference type="FunCoup" id="Q3MHP1">
    <property type="interactions" value="3960"/>
</dbReference>
<dbReference type="STRING" id="9913.ENSBTAP00000017332"/>
<dbReference type="PaxDb" id="9913-ENSBTAP00000017332"/>
<dbReference type="PeptideAtlas" id="Q3MHP1"/>
<dbReference type="Ensembl" id="ENSBTAT00000083191.2">
    <property type="protein sequence ID" value="ENSBTAP00000071809.2"/>
    <property type="gene ID" value="ENSBTAG00000013038.7"/>
</dbReference>
<dbReference type="GeneID" id="767894"/>
<dbReference type="KEGG" id="bta:767894"/>
<dbReference type="CTD" id="7332"/>
<dbReference type="VEuPathDB" id="HostDB:ENSBTAG00000013038"/>
<dbReference type="VGNC" id="VGNC:53927">
    <property type="gene designation" value="UBE2L3"/>
</dbReference>
<dbReference type="eggNOG" id="KOG0422">
    <property type="taxonomic scope" value="Eukaryota"/>
</dbReference>
<dbReference type="GeneTree" id="ENSGT00940000153654"/>
<dbReference type="InParanoid" id="Q3MHP1"/>
<dbReference type="OrthoDB" id="9973183at2759"/>
<dbReference type="Reactome" id="R-BTA-5357905">
    <property type="pathway name" value="Regulation of TNFR1 signaling"/>
</dbReference>
<dbReference type="Reactome" id="R-BTA-5675482">
    <property type="pathway name" value="Regulation of necroptotic cell death"/>
</dbReference>
<dbReference type="Reactome" id="R-BTA-8866652">
    <property type="pathway name" value="Synthesis of active ubiquitin: roles of E1 and E2 enzymes"/>
</dbReference>
<dbReference type="Reactome" id="R-BTA-8866654">
    <property type="pathway name" value="E3 ubiquitin ligases ubiquitinate target proteins"/>
</dbReference>
<dbReference type="Reactome" id="R-BTA-983168">
    <property type="pathway name" value="Antigen processing: Ubiquitination &amp; Proteasome degradation"/>
</dbReference>
<dbReference type="UniPathway" id="UPA00143"/>
<dbReference type="Proteomes" id="UP000009136">
    <property type="component" value="Chromosome 17"/>
</dbReference>
<dbReference type="Bgee" id="ENSBTAG00000013038">
    <property type="expression patterns" value="Expressed in spermatocyte and 100 other cell types or tissues"/>
</dbReference>
<dbReference type="GO" id="GO:0005737">
    <property type="term" value="C:cytoplasm"/>
    <property type="evidence" value="ECO:0000250"/>
    <property type="project" value="UniProtKB"/>
</dbReference>
<dbReference type="GO" id="GO:0005634">
    <property type="term" value="C:nucleus"/>
    <property type="evidence" value="ECO:0000250"/>
    <property type="project" value="UniProtKB"/>
</dbReference>
<dbReference type="GO" id="GO:0005524">
    <property type="term" value="F:ATP binding"/>
    <property type="evidence" value="ECO:0007669"/>
    <property type="project" value="UniProtKB-KW"/>
</dbReference>
<dbReference type="GO" id="GO:0003713">
    <property type="term" value="F:transcription coactivator activity"/>
    <property type="evidence" value="ECO:0000250"/>
    <property type="project" value="UniProtKB"/>
</dbReference>
<dbReference type="GO" id="GO:0061631">
    <property type="term" value="F:ubiquitin conjugating enzyme activity"/>
    <property type="evidence" value="ECO:0000318"/>
    <property type="project" value="GO_Central"/>
</dbReference>
<dbReference type="GO" id="GO:0004842">
    <property type="term" value="F:ubiquitin-protein transferase activity"/>
    <property type="evidence" value="ECO:0000250"/>
    <property type="project" value="UniProtKB"/>
</dbReference>
<dbReference type="GO" id="GO:0044770">
    <property type="term" value="P:cell cycle phase transition"/>
    <property type="evidence" value="ECO:0000250"/>
    <property type="project" value="UniProtKB"/>
</dbReference>
<dbReference type="GO" id="GO:0008283">
    <property type="term" value="P:cell population proliferation"/>
    <property type="evidence" value="ECO:0000250"/>
    <property type="project" value="UniProtKB"/>
</dbReference>
<dbReference type="GO" id="GO:0071385">
    <property type="term" value="P:cellular response to glucocorticoid stimulus"/>
    <property type="evidence" value="ECO:0000250"/>
    <property type="project" value="UniProtKB"/>
</dbReference>
<dbReference type="GO" id="GO:0071383">
    <property type="term" value="P:cellular response to steroid hormone stimulus"/>
    <property type="evidence" value="ECO:0000250"/>
    <property type="project" value="UniProtKB"/>
</dbReference>
<dbReference type="GO" id="GO:0070979">
    <property type="term" value="P:protein K11-linked ubiquitination"/>
    <property type="evidence" value="ECO:0000250"/>
    <property type="project" value="UniProtKB"/>
</dbReference>
<dbReference type="GO" id="GO:0000209">
    <property type="term" value="P:protein polyubiquitination"/>
    <property type="evidence" value="ECO:0000250"/>
    <property type="project" value="UniProtKB"/>
</dbReference>
<dbReference type="GO" id="GO:0016567">
    <property type="term" value="P:protein ubiquitination"/>
    <property type="evidence" value="ECO:0000250"/>
    <property type="project" value="UniProtKB"/>
</dbReference>
<dbReference type="GO" id="GO:0006355">
    <property type="term" value="P:regulation of DNA-templated transcription"/>
    <property type="evidence" value="ECO:0000250"/>
    <property type="project" value="UniProtKB"/>
</dbReference>
<dbReference type="GO" id="GO:0006511">
    <property type="term" value="P:ubiquitin-dependent protein catabolic process"/>
    <property type="evidence" value="ECO:0000318"/>
    <property type="project" value="GO_Central"/>
</dbReference>
<dbReference type="CDD" id="cd23801">
    <property type="entry name" value="UBCc_UBE2L3"/>
    <property type="match status" value="1"/>
</dbReference>
<dbReference type="FunFam" id="3.10.110.10:FF:000011">
    <property type="entry name" value="Ubiquitin-conjugating enzyme E2 L3"/>
    <property type="match status" value="1"/>
</dbReference>
<dbReference type="Gene3D" id="3.10.110.10">
    <property type="entry name" value="Ubiquitin Conjugating Enzyme"/>
    <property type="match status" value="1"/>
</dbReference>
<dbReference type="InterPro" id="IPR050113">
    <property type="entry name" value="Ub_conjugating_enzyme"/>
</dbReference>
<dbReference type="InterPro" id="IPR000608">
    <property type="entry name" value="UBQ-conjugat_E2_core"/>
</dbReference>
<dbReference type="InterPro" id="IPR023313">
    <property type="entry name" value="UBQ-conjugating_AS"/>
</dbReference>
<dbReference type="InterPro" id="IPR016135">
    <property type="entry name" value="UBQ-conjugating_enzyme/RWD"/>
</dbReference>
<dbReference type="PANTHER" id="PTHR24067">
    <property type="entry name" value="UBIQUITIN-CONJUGATING ENZYME E2"/>
    <property type="match status" value="1"/>
</dbReference>
<dbReference type="Pfam" id="PF00179">
    <property type="entry name" value="UQ_con"/>
    <property type="match status" value="1"/>
</dbReference>
<dbReference type="SMART" id="SM00212">
    <property type="entry name" value="UBCc"/>
    <property type="match status" value="1"/>
</dbReference>
<dbReference type="SUPFAM" id="SSF54495">
    <property type="entry name" value="UBC-like"/>
    <property type="match status" value="1"/>
</dbReference>
<dbReference type="PROSITE" id="PS00183">
    <property type="entry name" value="UBC_1"/>
    <property type="match status" value="1"/>
</dbReference>
<dbReference type="PROSITE" id="PS50127">
    <property type="entry name" value="UBC_2"/>
    <property type="match status" value="1"/>
</dbReference>
<keyword id="KW-0007">Acetylation</keyword>
<keyword id="KW-0067">ATP-binding</keyword>
<keyword id="KW-0963">Cytoplasm</keyword>
<keyword id="KW-0547">Nucleotide-binding</keyword>
<keyword id="KW-0539">Nucleus</keyword>
<keyword id="KW-1185">Reference proteome</keyword>
<keyword id="KW-0804">Transcription</keyword>
<keyword id="KW-0805">Transcription regulation</keyword>
<keyword id="KW-0808">Transferase</keyword>
<keyword id="KW-0832">Ubl conjugation</keyword>
<keyword id="KW-0833">Ubl conjugation pathway</keyword>
<comment type="function">
    <text evidence="1">Ubiquitin-conjugating enzyme E2 that specifically acts with HECT-type and RBR family E3 ubiquitin-protein ligases. Does not function with most RING-containing E3 ubiquitin-protein ligases because it lacks intrinsic E3-independent reactivity with lysine: in contrast, it has activity with the RBR family E3 enzymes, such as PRKN, RNF31 and ARIH1, that function like RING-HECT hybrids. Accepts ubiquitin from the E1 complex and catalyzes its covalent attachment to other proteins. Mediates ubiquitination by the CUL9-RBX1 complex (By similarity). In vitro catalyzes 'Lys-11'-linked polyubiquitination. Involved in the selective degradation of short-lived and abnormal proteins. Down-regulated during the S-phase it is involved in progression through the cell cycle. Regulates nuclear hormone receptors transcriptional activity. May play a role in myelopoiesis.</text>
</comment>
<comment type="catalytic activity">
    <reaction evidence="2 3">
        <text>S-ubiquitinyl-[E1 ubiquitin-activating enzyme]-L-cysteine + [E2 ubiquitin-conjugating enzyme]-L-cysteine = [E1 ubiquitin-activating enzyme]-L-cysteine + S-ubiquitinyl-[E2 ubiquitin-conjugating enzyme]-L-cysteine.</text>
        <dbReference type="EC" id="2.3.2.23"/>
    </reaction>
</comment>
<comment type="pathway">
    <text evidence="2">Protein modification; protein ubiquitination.</text>
</comment>
<comment type="subunit">
    <text evidence="1">Interacts with PRKN; involved in ubiquitination and degradation of misfolded proteins. Interacts with UBE3A. Interacts with CCNB1IP1, CBL, ZAP70, RNF19A, RNF19B and RNF144B. Interacts with ARIH1. Interacts with ARIH2 (via RING-type 1). Interacts with NCOA1; they functionally interact to regulate progesterone receptor transcriptional activity. Interacts with NDFIP1 (via N-terminus); the interaction mediates recruitment of UBE2L3 to ITCH and causes MAP3K7 ubiquitination.</text>
</comment>
<comment type="subcellular location">
    <subcellularLocation>
        <location evidence="1">Nucleus</location>
    </subcellularLocation>
    <subcellularLocation>
        <location evidence="1">Cytoplasm</location>
    </subcellularLocation>
</comment>
<comment type="domain">
    <text evidence="1">In contrast to other ubiquitin-conjugating enzymes E2, residues essential for lysine reactivity are absent: Pro and a His residues are present instead of an Asp and an Asp residues in positions 88 and 119, respectively.</text>
</comment>
<comment type="PTM">
    <text evidence="1">Ubiquitinated. The alteration of UBE2L3 protein levels during the S-phase of the cell cycle is due to ubiquitin-dependent proteasomal degradation. Autoubiquitinated in vitro.</text>
</comment>
<comment type="similarity">
    <text evidence="2">Belongs to the ubiquitin-conjugating enzyme family.</text>
</comment>
<accession>Q3MHP1</accession>
<accession>Q1JPH3</accession>
<reference key="1">
    <citation type="submission" date="2005-09" db="EMBL/GenBank/DDBJ databases">
        <authorList>
            <consortium name="NIH - Mammalian Gene Collection (MGC) project"/>
        </authorList>
    </citation>
    <scope>NUCLEOTIDE SEQUENCE [LARGE SCALE MRNA]</scope>
    <source>
        <strain>Crossbred X Angus</strain>
        <tissue>Liver</tissue>
    </source>
</reference>
<reference key="2">
    <citation type="journal article" date="2005" name="BMC Genomics">
        <title>Characterization of 954 bovine full-CDS cDNA sequences.</title>
        <authorList>
            <person name="Harhay G.P."/>
            <person name="Sonstegard T.S."/>
            <person name="Keele J.W."/>
            <person name="Heaton M.P."/>
            <person name="Clawson M.L."/>
            <person name="Snelling W.M."/>
            <person name="Wiedmann R.T."/>
            <person name="Van Tassell C.P."/>
            <person name="Smith T.P.L."/>
        </authorList>
    </citation>
    <scope>NUCLEOTIDE SEQUENCE [LARGE SCALE MRNA] OF 2-154</scope>
</reference>
<protein>
    <recommendedName>
        <fullName>Ubiquitin-conjugating enzyme E2 L3</fullName>
        <ecNumber>2.3.2.23</ecNumber>
    </recommendedName>
    <alternativeName>
        <fullName>E2 ubiquitin-conjugating enzyme L3</fullName>
    </alternativeName>
    <alternativeName>
        <fullName>Ubiquitin carrier protein L3</fullName>
    </alternativeName>
    <alternativeName>
        <fullName>Ubiquitin-protein ligase L3</fullName>
    </alternativeName>
</protein>
<name>UB2L3_BOVIN</name>